<organism>
    <name type="scientific">Synechococcus sp. (strain CC9311)</name>
    <dbReference type="NCBI Taxonomy" id="64471"/>
    <lineage>
        <taxon>Bacteria</taxon>
        <taxon>Bacillati</taxon>
        <taxon>Cyanobacteriota</taxon>
        <taxon>Cyanophyceae</taxon>
        <taxon>Synechococcales</taxon>
        <taxon>Synechococcaceae</taxon>
        <taxon>Synechococcus</taxon>
    </lineage>
</organism>
<dbReference type="EC" id="2.8.4.4" evidence="1"/>
<dbReference type="EMBL" id="CP000435">
    <property type="protein sequence ID" value="ABI47503.1"/>
    <property type="molecule type" value="Genomic_DNA"/>
</dbReference>
<dbReference type="SMR" id="Q0I735"/>
<dbReference type="STRING" id="64471.sync_2548"/>
<dbReference type="KEGG" id="syg:sync_2548"/>
<dbReference type="eggNOG" id="COG0621">
    <property type="taxonomic scope" value="Bacteria"/>
</dbReference>
<dbReference type="HOGENOM" id="CLU_018697_0_1_3"/>
<dbReference type="Proteomes" id="UP000001961">
    <property type="component" value="Chromosome"/>
</dbReference>
<dbReference type="GO" id="GO:0005829">
    <property type="term" value="C:cytosol"/>
    <property type="evidence" value="ECO:0007669"/>
    <property type="project" value="TreeGrafter"/>
</dbReference>
<dbReference type="GO" id="GO:0051539">
    <property type="term" value="F:4 iron, 4 sulfur cluster binding"/>
    <property type="evidence" value="ECO:0007669"/>
    <property type="project" value="UniProtKB-UniRule"/>
</dbReference>
<dbReference type="GO" id="GO:0035599">
    <property type="term" value="F:aspartic acid methylthiotransferase activity"/>
    <property type="evidence" value="ECO:0007669"/>
    <property type="project" value="TreeGrafter"/>
</dbReference>
<dbReference type="GO" id="GO:0046872">
    <property type="term" value="F:metal ion binding"/>
    <property type="evidence" value="ECO:0007669"/>
    <property type="project" value="UniProtKB-KW"/>
</dbReference>
<dbReference type="GO" id="GO:0103039">
    <property type="term" value="F:protein methylthiotransferase activity"/>
    <property type="evidence" value="ECO:0007669"/>
    <property type="project" value="UniProtKB-EC"/>
</dbReference>
<dbReference type="GO" id="GO:0006400">
    <property type="term" value="P:tRNA modification"/>
    <property type="evidence" value="ECO:0007669"/>
    <property type="project" value="InterPro"/>
</dbReference>
<dbReference type="CDD" id="cd01335">
    <property type="entry name" value="Radical_SAM"/>
    <property type="match status" value="1"/>
</dbReference>
<dbReference type="FunFam" id="3.80.30.20:FF:000001">
    <property type="entry name" value="tRNA-2-methylthio-N(6)-dimethylallyladenosine synthase 2"/>
    <property type="match status" value="1"/>
</dbReference>
<dbReference type="Gene3D" id="3.40.50.12160">
    <property type="entry name" value="Methylthiotransferase, N-terminal domain"/>
    <property type="match status" value="1"/>
</dbReference>
<dbReference type="Gene3D" id="2.40.50.140">
    <property type="entry name" value="Nucleic acid-binding proteins"/>
    <property type="match status" value="1"/>
</dbReference>
<dbReference type="Gene3D" id="3.80.30.20">
    <property type="entry name" value="tm_1862 like domain"/>
    <property type="match status" value="1"/>
</dbReference>
<dbReference type="HAMAP" id="MF_01865">
    <property type="entry name" value="MTTase_RimO"/>
    <property type="match status" value="1"/>
</dbReference>
<dbReference type="InterPro" id="IPR006638">
    <property type="entry name" value="Elp3/MiaA/NifB-like_rSAM"/>
</dbReference>
<dbReference type="InterPro" id="IPR005839">
    <property type="entry name" value="Methylthiotransferase"/>
</dbReference>
<dbReference type="InterPro" id="IPR020612">
    <property type="entry name" value="Methylthiotransferase_CS"/>
</dbReference>
<dbReference type="InterPro" id="IPR013848">
    <property type="entry name" value="Methylthiotransferase_N"/>
</dbReference>
<dbReference type="InterPro" id="IPR038135">
    <property type="entry name" value="Methylthiotransferase_N_sf"/>
</dbReference>
<dbReference type="InterPro" id="IPR012340">
    <property type="entry name" value="NA-bd_OB-fold"/>
</dbReference>
<dbReference type="InterPro" id="IPR005840">
    <property type="entry name" value="Ribosomal_uS12_MeSTrfase_RimO"/>
</dbReference>
<dbReference type="InterPro" id="IPR007197">
    <property type="entry name" value="rSAM"/>
</dbReference>
<dbReference type="InterPro" id="IPR023404">
    <property type="entry name" value="rSAM_horseshoe"/>
</dbReference>
<dbReference type="InterPro" id="IPR002792">
    <property type="entry name" value="TRAM_dom"/>
</dbReference>
<dbReference type="NCBIfam" id="TIGR01125">
    <property type="entry name" value="30S ribosomal protein S12 methylthiotransferase RimO"/>
    <property type="match status" value="1"/>
</dbReference>
<dbReference type="NCBIfam" id="TIGR00089">
    <property type="entry name" value="MiaB/RimO family radical SAM methylthiotransferase"/>
    <property type="match status" value="1"/>
</dbReference>
<dbReference type="PANTHER" id="PTHR43837">
    <property type="entry name" value="RIBOSOMAL PROTEIN S12 METHYLTHIOTRANSFERASE RIMO"/>
    <property type="match status" value="1"/>
</dbReference>
<dbReference type="PANTHER" id="PTHR43837:SF1">
    <property type="entry name" value="RIBOSOMAL PROTEIN US12 METHYLTHIOTRANSFERASE RIMO"/>
    <property type="match status" value="1"/>
</dbReference>
<dbReference type="Pfam" id="PF04055">
    <property type="entry name" value="Radical_SAM"/>
    <property type="match status" value="1"/>
</dbReference>
<dbReference type="Pfam" id="PF18693">
    <property type="entry name" value="TRAM_2"/>
    <property type="match status" value="1"/>
</dbReference>
<dbReference type="Pfam" id="PF00919">
    <property type="entry name" value="UPF0004"/>
    <property type="match status" value="1"/>
</dbReference>
<dbReference type="SFLD" id="SFLDG01082">
    <property type="entry name" value="B12-binding_domain_containing"/>
    <property type="match status" value="1"/>
</dbReference>
<dbReference type="SFLD" id="SFLDG01061">
    <property type="entry name" value="methylthiotransferase"/>
    <property type="match status" value="1"/>
</dbReference>
<dbReference type="SFLD" id="SFLDF00274">
    <property type="entry name" value="ribosomal_protein_S12_methylth"/>
    <property type="match status" value="1"/>
</dbReference>
<dbReference type="SMART" id="SM00729">
    <property type="entry name" value="Elp3"/>
    <property type="match status" value="1"/>
</dbReference>
<dbReference type="SUPFAM" id="SSF102114">
    <property type="entry name" value="Radical SAM enzymes"/>
    <property type="match status" value="1"/>
</dbReference>
<dbReference type="PROSITE" id="PS51449">
    <property type="entry name" value="MTTASE_N"/>
    <property type="match status" value="1"/>
</dbReference>
<dbReference type="PROSITE" id="PS01278">
    <property type="entry name" value="MTTASE_RADICAL"/>
    <property type="match status" value="1"/>
</dbReference>
<dbReference type="PROSITE" id="PS51918">
    <property type="entry name" value="RADICAL_SAM"/>
    <property type="match status" value="1"/>
</dbReference>
<dbReference type="PROSITE" id="PS50926">
    <property type="entry name" value="TRAM"/>
    <property type="match status" value="1"/>
</dbReference>
<proteinExistence type="inferred from homology"/>
<sequence length="470" mass="51359">MQGHAMAVDAKTGNSLSERPTVAFAHLGCEKNRVDTEHMLGLLAEAGYGVSSDENDANLVVVNTCSFIQDAREESVRTLVGLAEQGKELIIAGCLAQHFQDELLESIPEAKAIVGTGDYQHIVEVLQQVEAGERVNRVSQTPTFVADENLPRYRTTGEAVAYLKVAEGCDYRCAFCIIPHLRGNQRSRTIESIVAEAHQLAEQGVQELILISQITTNYGLDLYGKPRLADLLKALGDVEIPWIRVHYAYPTGLTPAVLAAYRDVPNVLPYLDLPLQHSHPEVLRAMNRPWQADVNERLLDQIREQLPNAILRTTLIVGFPGETEDQFEHLAGFLERQRFDHVGIFTFSPEDGTAAATLPDSVPDEIAIARKDKLMTLQQPISAARNASWIGKTVDVLVEQHNPSTGEMIGRCSRFAPEVDGEVLVQPGDNGLQVNPGTMVPVQITGADIYDLSGHVVSAAHMVAAARAAT</sequence>
<name>RIMO_SYNS3</name>
<protein>
    <recommendedName>
        <fullName evidence="1">Ribosomal protein uS12 methylthiotransferase RimO</fullName>
        <shortName evidence="1">uS12 MTTase</shortName>
        <shortName evidence="1">uS12 methylthiotransferase</shortName>
        <ecNumber evidence="1">2.8.4.4</ecNumber>
    </recommendedName>
    <alternativeName>
        <fullName evidence="1">Ribosomal protein uS12 (aspartate-C(3))-methylthiotransferase</fullName>
    </alternativeName>
    <alternativeName>
        <fullName evidence="1">Ribosome maturation factor RimO</fullName>
    </alternativeName>
</protein>
<gene>
    <name evidence="1" type="primary">rimO</name>
    <name type="ordered locus">sync_2548</name>
</gene>
<evidence type="ECO:0000255" key="1">
    <source>
        <dbReference type="HAMAP-Rule" id="MF_01865"/>
    </source>
</evidence>
<evidence type="ECO:0000255" key="2">
    <source>
        <dbReference type="PROSITE-ProRule" id="PRU01266"/>
    </source>
</evidence>
<feature type="chain" id="PRO_0000375032" description="Ribosomal protein uS12 methylthiotransferase RimO">
    <location>
        <begin position="1"/>
        <end position="470"/>
    </location>
</feature>
<feature type="domain" description="MTTase N-terminal" evidence="1">
    <location>
        <begin position="20"/>
        <end position="131"/>
    </location>
</feature>
<feature type="domain" description="Radical SAM core" evidence="2">
    <location>
        <begin position="155"/>
        <end position="384"/>
    </location>
</feature>
<feature type="domain" description="TRAM" evidence="1">
    <location>
        <begin position="387"/>
        <end position="458"/>
    </location>
</feature>
<feature type="binding site" evidence="1">
    <location>
        <position position="29"/>
    </location>
    <ligand>
        <name>[4Fe-4S] cluster</name>
        <dbReference type="ChEBI" id="CHEBI:49883"/>
        <label>1</label>
    </ligand>
</feature>
<feature type="binding site" evidence="1">
    <location>
        <position position="65"/>
    </location>
    <ligand>
        <name>[4Fe-4S] cluster</name>
        <dbReference type="ChEBI" id="CHEBI:49883"/>
        <label>1</label>
    </ligand>
</feature>
<feature type="binding site" evidence="1">
    <location>
        <position position="94"/>
    </location>
    <ligand>
        <name>[4Fe-4S] cluster</name>
        <dbReference type="ChEBI" id="CHEBI:49883"/>
        <label>1</label>
    </ligand>
</feature>
<feature type="binding site" evidence="1">
    <location>
        <position position="169"/>
    </location>
    <ligand>
        <name>[4Fe-4S] cluster</name>
        <dbReference type="ChEBI" id="CHEBI:49883"/>
        <label>2</label>
        <note>4Fe-4S-S-AdoMet</note>
    </ligand>
</feature>
<feature type="binding site" evidence="1">
    <location>
        <position position="173"/>
    </location>
    <ligand>
        <name>[4Fe-4S] cluster</name>
        <dbReference type="ChEBI" id="CHEBI:49883"/>
        <label>2</label>
        <note>4Fe-4S-S-AdoMet</note>
    </ligand>
</feature>
<feature type="binding site" evidence="1">
    <location>
        <position position="176"/>
    </location>
    <ligand>
        <name>[4Fe-4S] cluster</name>
        <dbReference type="ChEBI" id="CHEBI:49883"/>
        <label>2</label>
        <note>4Fe-4S-S-AdoMet</note>
    </ligand>
</feature>
<accession>Q0I735</accession>
<reference key="1">
    <citation type="journal article" date="2006" name="Proc. Natl. Acad. Sci. U.S.A.">
        <title>Genome sequence of Synechococcus CC9311: insights into adaptation to a coastal environment.</title>
        <authorList>
            <person name="Palenik B."/>
            <person name="Ren Q."/>
            <person name="Dupont C.L."/>
            <person name="Myers G.S."/>
            <person name="Heidelberg J.F."/>
            <person name="Badger J.H."/>
            <person name="Madupu R."/>
            <person name="Nelson W.C."/>
            <person name="Brinkac L.M."/>
            <person name="Dodson R.J."/>
            <person name="Durkin A.S."/>
            <person name="Daugherty S.C."/>
            <person name="Sullivan S.A."/>
            <person name="Khouri H."/>
            <person name="Mohamoud Y."/>
            <person name="Halpin R."/>
            <person name="Paulsen I.T."/>
        </authorList>
    </citation>
    <scope>NUCLEOTIDE SEQUENCE [LARGE SCALE GENOMIC DNA]</scope>
    <source>
        <strain>CC9311</strain>
    </source>
</reference>
<comment type="function">
    <text evidence="1">Catalyzes the methylthiolation of an aspartic acid residue of ribosomal protein uS12.</text>
</comment>
<comment type="catalytic activity">
    <reaction evidence="1">
        <text>L-aspartate(89)-[ribosomal protein uS12]-hydrogen + (sulfur carrier)-SH + AH2 + 2 S-adenosyl-L-methionine = 3-methylsulfanyl-L-aspartate(89)-[ribosomal protein uS12]-hydrogen + (sulfur carrier)-H + 5'-deoxyadenosine + L-methionine + A + S-adenosyl-L-homocysteine + 2 H(+)</text>
        <dbReference type="Rhea" id="RHEA:37087"/>
        <dbReference type="Rhea" id="RHEA-COMP:10460"/>
        <dbReference type="Rhea" id="RHEA-COMP:10461"/>
        <dbReference type="Rhea" id="RHEA-COMP:14737"/>
        <dbReference type="Rhea" id="RHEA-COMP:14739"/>
        <dbReference type="ChEBI" id="CHEBI:13193"/>
        <dbReference type="ChEBI" id="CHEBI:15378"/>
        <dbReference type="ChEBI" id="CHEBI:17319"/>
        <dbReference type="ChEBI" id="CHEBI:17499"/>
        <dbReference type="ChEBI" id="CHEBI:29917"/>
        <dbReference type="ChEBI" id="CHEBI:29961"/>
        <dbReference type="ChEBI" id="CHEBI:57844"/>
        <dbReference type="ChEBI" id="CHEBI:57856"/>
        <dbReference type="ChEBI" id="CHEBI:59789"/>
        <dbReference type="ChEBI" id="CHEBI:64428"/>
        <dbReference type="ChEBI" id="CHEBI:73599"/>
        <dbReference type="EC" id="2.8.4.4"/>
    </reaction>
</comment>
<comment type="cofactor">
    <cofactor evidence="1">
        <name>[4Fe-4S] cluster</name>
        <dbReference type="ChEBI" id="CHEBI:49883"/>
    </cofactor>
    <text evidence="1">Binds 2 [4Fe-4S] clusters. One cluster is coordinated with 3 cysteines and an exchangeable S-adenosyl-L-methionine.</text>
</comment>
<comment type="subcellular location">
    <subcellularLocation>
        <location evidence="1">Cytoplasm</location>
    </subcellularLocation>
</comment>
<comment type="similarity">
    <text evidence="1">Belongs to the methylthiotransferase family. RimO subfamily.</text>
</comment>
<keyword id="KW-0004">4Fe-4S</keyword>
<keyword id="KW-0963">Cytoplasm</keyword>
<keyword id="KW-0408">Iron</keyword>
<keyword id="KW-0411">Iron-sulfur</keyword>
<keyword id="KW-0479">Metal-binding</keyword>
<keyword id="KW-1185">Reference proteome</keyword>
<keyword id="KW-0949">S-adenosyl-L-methionine</keyword>
<keyword id="KW-0808">Transferase</keyword>